<proteinExistence type="inferred from homology"/>
<dbReference type="EC" id="2.7.1.30" evidence="1"/>
<dbReference type="EMBL" id="CP000555">
    <property type="protein sequence ID" value="ABM96618.1"/>
    <property type="molecule type" value="Genomic_DNA"/>
</dbReference>
<dbReference type="RefSeq" id="WP_011831238.1">
    <property type="nucleotide sequence ID" value="NC_008825.1"/>
</dbReference>
<dbReference type="SMR" id="A2SM29"/>
<dbReference type="STRING" id="420662.Mpe_A3665"/>
<dbReference type="KEGG" id="mpt:Mpe_A3665"/>
<dbReference type="eggNOG" id="COG0554">
    <property type="taxonomic scope" value="Bacteria"/>
</dbReference>
<dbReference type="HOGENOM" id="CLU_009281_2_3_4"/>
<dbReference type="UniPathway" id="UPA00618">
    <property type="reaction ID" value="UER00672"/>
</dbReference>
<dbReference type="Proteomes" id="UP000000366">
    <property type="component" value="Chromosome"/>
</dbReference>
<dbReference type="GO" id="GO:0005829">
    <property type="term" value="C:cytosol"/>
    <property type="evidence" value="ECO:0007669"/>
    <property type="project" value="TreeGrafter"/>
</dbReference>
<dbReference type="GO" id="GO:0005524">
    <property type="term" value="F:ATP binding"/>
    <property type="evidence" value="ECO:0007669"/>
    <property type="project" value="UniProtKB-UniRule"/>
</dbReference>
<dbReference type="GO" id="GO:0004370">
    <property type="term" value="F:glycerol kinase activity"/>
    <property type="evidence" value="ECO:0000250"/>
    <property type="project" value="UniProtKB"/>
</dbReference>
<dbReference type="GO" id="GO:0019563">
    <property type="term" value="P:glycerol catabolic process"/>
    <property type="evidence" value="ECO:0007669"/>
    <property type="project" value="UniProtKB-UniRule"/>
</dbReference>
<dbReference type="GO" id="GO:0006071">
    <property type="term" value="P:glycerol metabolic process"/>
    <property type="evidence" value="ECO:0000250"/>
    <property type="project" value="UniProtKB"/>
</dbReference>
<dbReference type="GO" id="GO:0006072">
    <property type="term" value="P:glycerol-3-phosphate metabolic process"/>
    <property type="evidence" value="ECO:0007669"/>
    <property type="project" value="InterPro"/>
</dbReference>
<dbReference type="CDD" id="cd07786">
    <property type="entry name" value="FGGY_EcGK_like"/>
    <property type="match status" value="1"/>
</dbReference>
<dbReference type="FunFam" id="3.30.420.40:FF:000007">
    <property type="entry name" value="Glycerol kinase"/>
    <property type="match status" value="1"/>
</dbReference>
<dbReference type="FunFam" id="3.30.420.40:FF:000008">
    <property type="entry name" value="Glycerol kinase"/>
    <property type="match status" value="1"/>
</dbReference>
<dbReference type="Gene3D" id="3.30.420.40">
    <property type="match status" value="2"/>
</dbReference>
<dbReference type="HAMAP" id="MF_00186">
    <property type="entry name" value="Glycerol_kin"/>
    <property type="match status" value="1"/>
</dbReference>
<dbReference type="InterPro" id="IPR043129">
    <property type="entry name" value="ATPase_NBD"/>
</dbReference>
<dbReference type="InterPro" id="IPR000577">
    <property type="entry name" value="Carb_kinase_FGGY"/>
</dbReference>
<dbReference type="InterPro" id="IPR018483">
    <property type="entry name" value="Carb_kinase_FGGY_CS"/>
</dbReference>
<dbReference type="InterPro" id="IPR018485">
    <property type="entry name" value="FGGY_C"/>
</dbReference>
<dbReference type="InterPro" id="IPR018484">
    <property type="entry name" value="FGGY_N"/>
</dbReference>
<dbReference type="InterPro" id="IPR005999">
    <property type="entry name" value="Glycerol_kin"/>
</dbReference>
<dbReference type="NCBIfam" id="TIGR01311">
    <property type="entry name" value="glycerol_kin"/>
    <property type="match status" value="1"/>
</dbReference>
<dbReference type="NCBIfam" id="NF000756">
    <property type="entry name" value="PRK00047.1"/>
    <property type="match status" value="1"/>
</dbReference>
<dbReference type="PANTHER" id="PTHR10196:SF69">
    <property type="entry name" value="GLYCEROL KINASE"/>
    <property type="match status" value="1"/>
</dbReference>
<dbReference type="PANTHER" id="PTHR10196">
    <property type="entry name" value="SUGAR KINASE"/>
    <property type="match status" value="1"/>
</dbReference>
<dbReference type="Pfam" id="PF02782">
    <property type="entry name" value="FGGY_C"/>
    <property type="match status" value="1"/>
</dbReference>
<dbReference type="Pfam" id="PF00370">
    <property type="entry name" value="FGGY_N"/>
    <property type="match status" value="1"/>
</dbReference>
<dbReference type="PIRSF" id="PIRSF000538">
    <property type="entry name" value="GlpK"/>
    <property type="match status" value="1"/>
</dbReference>
<dbReference type="SUPFAM" id="SSF53067">
    <property type="entry name" value="Actin-like ATPase domain"/>
    <property type="match status" value="2"/>
</dbReference>
<dbReference type="PROSITE" id="PS00933">
    <property type="entry name" value="FGGY_KINASES_1"/>
    <property type="match status" value="1"/>
</dbReference>
<dbReference type="PROSITE" id="PS00445">
    <property type="entry name" value="FGGY_KINASES_2"/>
    <property type="match status" value="1"/>
</dbReference>
<evidence type="ECO:0000255" key="1">
    <source>
        <dbReference type="HAMAP-Rule" id="MF_00186"/>
    </source>
</evidence>
<accession>A2SM29</accession>
<keyword id="KW-0067">ATP-binding</keyword>
<keyword id="KW-0319">Glycerol metabolism</keyword>
<keyword id="KW-0418">Kinase</keyword>
<keyword id="KW-0547">Nucleotide-binding</keyword>
<keyword id="KW-1185">Reference proteome</keyword>
<keyword id="KW-0808">Transferase</keyword>
<gene>
    <name evidence="1" type="primary">glpK</name>
    <name type="ordered locus">Mpe_A3665</name>
</gene>
<reference key="1">
    <citation type="journal article" date="2007" name="J. Bacteriol.">
        <title>Whole-genome analysis of the methyl tert-butyl ether-degrading beta-proteobacterium Methylibium petroleiphilum PM1.</title>
        <authorList>
            <person name="Kane S.R."/>
            <person name="Chakicherla A.Y."/>
            <person name="Chain P.S.G."/>
            <person name="Schmidt R."/>
            <person name="Shin M.W."/>
            <person name="Legler T.C."/>
            <person name="Scow K.M."/>
            <person name="Larimer F.W."/>
            <person name="Lucas S.M."/>
            <person name="Richardson P.M."/>
            <person name="Hristova K.R."/>
        </authorList>
    </citation>
    <scope>NUCLEOTIDE SEQUENCE [LARGE SCALE GENOMIC DNA]</scope>
    <source>
        <strain>ATCC BAA-1232 / LMG 22953 / PM1</strain>
    </source>
</reference>
<comment type="function">
    <text evidence="1">Key enzyme in the regulation of glycerol uptake and metabolism. Catalyzes the phosphorylation of glycerol to yield sn-glycerol 3-phosphate.</text>
</comment>
<comment type="catalytic activity">
    <reaction evidence="1">
        <text>glycerol + ATP = sn-glycerol 3-phosphate + ADP + H(+)</text>
        <dbReference type="Rhea" id="RHEA:21644"/>
        <dbReference type="ChEBI" id="CHEBI:15378"/>
        <dbReference type="ChEBI" id="CHEBI:17754"/>
        <dbReference type="ChEBI" id="CHEBI:30616"/>
        <dbReference type="ChEBI" id="CHEBI:57597"/>
        <dbReference type="ChEBI" id="CHEBI:456216"/>
        <dbReference type="EC" id="2.7.1.30"/>
    </reaction>
</comment>
<comment type="activity regulation">
    <text evidence="1">Inhibited by fructose 1,6-bisphosphate (FBP).</text>
</comment>
<comment type="pathway">
    <text evidence="1">Polyol metabolism; glycerol degradation via glycerol kinase pathway; sn-glycerol 3-phosphate from glycerol: step 1/1.</text>
</comment>
<comment type="similarity">
    <text evidence="1">Belongs to the FGGY kinase family.</text>
</comment>
<protein>
    <recommendedName>
        <fullName evidence="1">Glycerol kinase</fullName>
        <ecNumber evidence="1">2.7.1.30</ecNumber>
    </recommendedName>
    <alternativeName>
        <fullName evidence="1">ATP:glycerol 3-phosphotransferase</fullName>
    </alternativeName>
    <alternativeName>
        <fullName evidence="1">Glycerokinase</fullName>
        <shortName evidence="1">GK</shortName>
    </alternativeName>
</protein>
<feature type="chain" id="PRO_1000098744" description="Glycerol kinase">
    <location>
        <begin position="1"/>
        <end position="499"/>
    </location>
</feature>
<feature type="binding site" evidence="1">
    <location>
        <position position="11"/>
    </location>
    <ligand>
        <name>ADP</name>
        <dbReference type="ChEBI" id="CHEBI:456216"/>
    </ligand>
</feature>
<feature type="binding site" evidence="1">
    <location>
        <position position="11"/>
    </location>
    <ligand>
        <name>ATP</name>
        <dbReference type="ChEBI" id="CHEBI:30616"/>
    </ligand>
</feature>
<feature type="binding site" evidence="1">
    <location>
        <position position="11"/>
    </location>
    <ligand>
        <name>sn-glycerol 3-phosphate</name>
        <dbReference type="ChEBI" id="CHEBI:57597"/>
    </ligand>
</feature>
<feature type="binding site" evidence="1">
    <location>
        <position position="12"/>
    </location>
    <ligand>
        <name>ATP</name>
        <dbReference type="ChEBI" id="CHEBI:30616"/>
    </ligand>
</feature>
<feature type="binding site" evidence="1">
    <location>
        <position position="13"/>
    </location>
    <ligand>
        <name>ATP</name>
        <dbReference type="ChEBI" id="CHEBI:30616"/>
    </ligand>
</feature>
<feature type="binding site" evidence="1">
    <location>
        <position position="15"/>
    </location>
    <ligand>
        <name>ADP</name>
        <dbReference type="ChEBI" id="CHEBI:456216"/>
    </ligand>
</feature>
<feature type="binding site" evidence="1">
    <location>
        <position position="81"/>
    </location>
    <ligand>
        <name>glycerol</name>
        <dbReference type="ChEBI" id="CHEBI:17754"/>
    </ligand>
</feature>
<feature type="binding site" evidence="1">
    <location>
        <position position="81"/>
    </location>
    <ligand>
        <name>sn-glycerol 3-phosphate</name>
        <dbReference type="ChEBI" id="CHEBI:57597"/>
    </ligand>
</feature>
<feature type="binding site" evidence="1">
    <location>
        <position position="82"/>
    </location>
    <ligand>
        <name>glycerol</name>
        <dbReference type="ChEBI" id="CHEBI:17754"/>
    </ligand>
</feature>
<feature type="binding site" evidence="1">
    <location>
        <position position="82"/>
    </location>
    <ligand>
        <name>sn-glycerol 3-phosphate</name>
        <dbReference type="ChEBI" id="CHEBI:57597"/>
    </ligand>
</feature>
<feature type="binding site" evidence="1">
    <location>
        <position position="133"/>
    </location>
    <ligand>
        <name>glycerol</name>
        <dbReference type="ChEBI" id="CHEBI:17754"/>
    </ligand>
</feature>
<feature type="binding site" evidence="1">
    <location>
        <position position="133"/>
    </location>
    <ligand>
        <name>sn-glycerol 3-phosphate</name>
        <dbReference type="ChEBI" id="CHEBI:57597"/>
    </ligand>
</feature>
<feature type="binding site" evidence="1">
    <location>
        <position position="242"/>
    </location>
    <ligand>
        <name>glycerol</name>
        <dbReference type="ChEBI" id="CHEBI:17754"/>
    </ligand>
</feature>
<feature type="binding site" evidence="1">
    <location>
        <position position="242"/>
    </location>
    <ligand>
        <name>sn-glycerol 3-phosphate</name>
        <dbReference type="ChEBI" id="CHEBI:57597"/>
    </ligand>
</feature>
<feature type="binding site" evidence="1">
    <location>
        <position position="243"/>
    </location>
    <ligand>
        <name>glycerol</name>
        <dbReference type="ChEBI" id="CHEBI:17754"/>
    </ligand>
</feature>
<feature type="binding site" evidence="1">
    <location>
        <position position="264"/>
    </location>
    <ligand>
        <name>ADP</name>
        <dbReference type="ChEBI" id="CHEBI:456216"/>
    </ligand>
</feature>
<feature type="binding site" evidence="1">
    <location>
        <position position="264"/>
    </location>
    <ligand>
        <name>ATP</name>
        <dbReference type="ChEBI" id="CHEBI:30616"/>
    </ligand>
</feature>
<feature type="binding site" evidence="1">
    <location>
        <position position="309"/>
    </location>
    <ligand>
        <name>ADP</name>
        <dbReference type="ChEBI" id="CHEBI:456216"/>
    </ligand>
</feature>
<feature type="binding site" evidence="1">
    <location>
        <position position="309"/>
    </location>
    <ligand>
        <name>ATP</name>
        <dbReference type="ChEBI" id="CHEBI:30616"/>
    </ligand>
</feature>
<feature type="binding site" evidence="1">
    <location>
        <position position="313"/>
    </location>
    <ligand>
        <name>ATP</name>
        <dbReference type="ChEBI" id="CHEBI:30616"/>
    </ligand>
</feature>
<feature type="binding site" evidence="1">
    <location>
        <position position="414"/>
    </location>
    <ligand>
        <name>ADP</name>
        <dbReference type="ChEBI" id="CHEBI:456216"/>
    </ligand>
</feature>
<feature type="binding site" evidence="1">
    <location>
        <position position="414"/>
    </location>
    <ligand>
        <name>ATP</name>
        <dbReference type="ChEBI" id="CHEBI:30616"/>
    </ligand>
</feature>
<feature type="binding site" evidence="1">
    <location>
        <position position="418"/>
    </location>
    <ligand>
        <name>ADP</name>
        <dbReference type="ChEBI" id="CHEBI:456216"/>
    </ligand>
</feature>
<organism>
    <name type="scientific">Methylibium petroleiphilum (strain ATCC BAA-1232 / LMG 22953 / PM1)</name>
    <dbReference type="NCBI Taxonomy" id="420662"/>
    <lineage>
        <taxon>Bacteria</taxon>
        <taxon>Pseudomonadati</taxon>
        <taxon>Pseudomonadota</taxon>
        <taxon>Betaproteobacteria</taxon>
        <taxon>Burkholderiales</taxon>
        <taxon>Sphaerotilaceae</taxon>
        <taxon>Methylibium</taxon>
    </lineage>
</organism>
<sequence>MTYLLALDQGTSSSRSIVFDRGGRIRAMAQREFRQLYPQPGWVEHDPMEIWETQLATAREALAQAGLTASDIAAIGITNQRETTLLWERASGRPIANAIVWQDRRTEPLCARWREQGLADAVRDVTGLVIDPYFSASKIAWLLDHVPGARTRAERGELAFGTVDSWLLRQLTGGRVHATDTTNASRTMLFDIDRGAWSEPLLAALDIPRALLPAVQQSASHFGDTEPALLGHAVPVCGIAGDQQAALFGQAGFQAGLAKNTYGTGCFLLMHTGAQRQASTHGLITTAAAQVDSTAPRQYALEGSVFIGGAVVQWLRDGLHAIRGSGEVQALAESVPDAGGVVVVPAFTGLGAPYWRPEASGAIVGLTRGSTVAHIARAALESIAFQSAALLDAMSRDAVAAGGQPVSELRVDGGACVNDLLMQFQADLLGIPVVRPQVIETTALGAACLAGLGCGLYAGTDELAAQWQAERRFLPTMPRERAAERMARWERAVRQTVAP</sequence>
<name>GLPK_METPP</name>